<evidence type="ECO:0000255" key="1">
    <source>
        <dbReference type="HAMAP-Rule" id="MF_01283"/>
    </source>
</evidence>
<reference key="1">
    <citation type="submission" date="2008-10" db="EMBL/GenBank/DDBJ databases">
        <title>Genome sequence of Bacillus cereus G9842.</title>
        <authorList>
            <person name="Dodson R.J."/>
            <person name="Durkin A.S."/>
            <person name="Rosovitz M.J."/>
            <person name="Rasko D.A."/>
            <person name="Hoffmaster A."/>
            <person name="Ravel J."/>
            <person name="Sutton G."/>
        </authorList>
    </citation>
    <scope>NUCLEOTIDE SEQUENCE [LARGE SCALE GENOMIC DNA]</scope>
    <source>
        <strain>G9842</strain>
    </source>
</reference>
<accession>B7IWM5</accession>
<dbReference type="EC" id="4.1.99.12" evidence="1"/>
<dbReference type="EC" id="3.5.4.25" evidence="1"/>
<dbReference type="EMBL" id="CP001186">
    <property type="protein sequence ID" value="ACK93168.1"/>
    <property type="molecule type" value="Genomic_DNA"/>
</dbReference>
<dbReference type="RefSeq" id="WP_000469006.1">
    <property type="nucleotide sequence ID" value="NC_011772.1"/>
</dbReference>
<dbReference type="SMR" id="B7IWM5"/>
<dbReference type="KEGG" id="bcg:BCG9842_B1015"/>
<dbReference type="HOGENOM" id="CLU_020273_1_2_9"/>
<dbReference type="UniPathway" id="UPA00275">
    <property type="reaction ID" value="UER00399"/>
</dbReference>
<dbReference type="UniPathway" id="UPA00275">
    <property type="reaction ID" value="UER00400"/>
</dbReference>
<dbReference type="Proteomes" id="UP000006744">
    <property type="component" value="Chromosome"/>
</dbReference>
<dbReference type="GO" id="GO:0005829">
    <property type="term" value="C:cytosol"/>
    <property type="evidence" value="ECO:0007669"/>
    <property type="project" value="TreeGrafter"/>
</dbReference>
<dbReference type="GO" id="GO:0008686">
    <property type="term" value="F:3,4-dihydroxy-2-butanone-4-phosphate synthase activity"/>
    <property type="evidence" value="ECO:0007669"/>
    <property type="project" value="UniProtKB-UniRule"/>
</dbReference>
<dbReference type="GO" id="GO:0005525">
    <property type="term" value="F:GTP binding"/>
    <property type="evidence" value="ECO:0007669"/>
    <property type="project" value="UniProtKB-KW"/>
</dbReference>
<dbReference type="GO" id="GO:0003935">
    <property type="term" value="F:GTP cyclohydrolase II activity"/>
    <property type="evidence" value="ECO:0007669"/>
    <property type="project" value="UniProtKB-UniRule"/>
</dbReference>
<dbReference type="GO" id="GO:0000287">
    <property type="term" value="F:magnesium ion binding"/>
    <property type="evidence" value="ECO:0007669"/>
    <property type="project" value="UniProtKB-UniRule"/>
</dbReference>
<dbReference type="GO" id="GO:0030145">
    <property type="term" value="F:manganese ion binding"/>
    <property type="evidence" value="ECO:0007669"/>
    <property type="project" value="UniProtKB-UniRule"/>
</dbReference>
<dbReference type="GO" id="GO:0008270">
    <property type="term" value="F:zinc ion binding"/>
    <property type="evidence" value="ECO:0007669"/>
    <property type="project" value="UniProtKB-UniRule"/>
</dbReference>
<dbReference type="GO" id="GO:0009231">
    <property type="term" value="P:riboflavin biosynthetic process"/>
    <property type="evidence" value="ECO:0007669"/>
    <property type="project" value="UniProtKB-UniRule"/>
</dbReference>
<dbReference type="CDD" id="cd00641">
    <property type="entry name" value="GTP_cyclohydro2"/>
    <property type="match status" value="1"/>
</dbReference>
<dbReference type="FunFam" id="3.40.50.10990:FF:000001">
    <property type="entry name" value="Riboflavin biosynthesis protein RibBA"/>
    <property type="match status" value="1"/>
</dbReference>
<dbReference type="FunFam" id="3.90.870.10:FF:000001">
    <property type="entry name" value="Riboflavin biosynthesis protein RibBA"/>
    <property type="match status" value="1"/>
</dbReference>
<dbReference type="Gene3D" id="3.90.870.10">
    <property type="entry name" value="DHBP synthase"/>
    <property type="match status" value="1"/>
</dbReference>
<dbReference type="Gene3D" id="3.40.50.10990">
    <property type="entry name" value="GTP cyclohydrolase II"/>
    <property type="match status" value="1"/>
</dbReference>
<dbReference type="HAMAP" id="MF_00179">
    <property type="entry name" value="RibA"/>
    <property type="match status" value="1"/>
</dbReference>
<dbReference type="HAMAP" id="MF_00180">
    <property type="entry name" value="RibB"/>
    <property type="match status" value="1"/>
</dbReference>
<dbReference type="HAMAP" id="MF_01283">
    <property type="entry name" value="RibBA"/>
    <property type="match status" value="1"/>
</dbReference>
<dbReference type="InterPro" id="IPR017945">
    <property type="entry name" value="DHBP_synth_RibB-like_a/b_dom"/>
</dbReference>
<dbReference type="InterPro" id="IPR000422">
    <property type="entry name" value="DHBP_synthase_RibB"/>
</dbReference>
<dbReference type="InterPro" id="IPR032677">
    <property type="entry name" value="GTP_cyclohydro_II"/>
</dbReference>
<dbReference type="InterPro" id="IPR000926">
    <property type="entry name" value="RibA"/>
</dbReference>
<dbReference type="InterPro" id="IPR036144">
    <property type="entry name" value="RibA-like_sf"/>
</dbReference>
<dbReference type="InterPro" id="IPR016299">
    <property type="entry name" value="Riboflavin_synth_RibBA"/>
</dbReference>
<dbReference type="NCBIfam" id="NF001591">
    <property type="entry name" value="PRK00393.1"/>
    <property type="match status" value="1"/>
</dbReference>
<dbReference type="NCBIfam" id="NF006803">
    <property type="entry name" value="PRK09311.1"/>
    <property type="match status" value="1"/>
</dbReference>
<dbReference type="NCBIfam" id="TIGR00505">
    <property type="entry name" value="ribA"/>
    <property type="match status" value="1"/>
</dbReference>
<dbReference type="NCBIfam" id="TIGR00506">
    <property type="entry name" value="ribB"/>
    <property type="match status" value="1"/>
</dbReference>
<dbReference type="PANTHER" id="PTHR21327:SF18">
    <property type="entry name" value="3,4-DIHYDROXY-2-BUTANONE 4-PHOSPHATE SYNTHASE"/>
    <property type="match status" value="1"/>
</dbReference>
<dbReference type="PANTHER" id="PTHR21327">
    <property type="entry name" value="GTP CYCLOHYDROLASE II-RELATED"/>
    <property type="match status" value="1"/>
</dbReference>
<dbReference type="Pfam" id="PF00926">
    <property type="entry name" value="DHBP_synthase"/>
    <property type="match status" value="1"/>
</dbReference>
<dbReference type="Pfam" id="PF00925">
    <property type="entry name" value="GTP_cyclohydro2"/>
    <property type="match status" value="1"/>
</dbReference>
<dbReference type="PIRSF" id="PIRSF001259">
    <property type="entry name" value="RibA"/>
    <property type="match status" value="1"/>
</dbReference>
<dbReference type="SUPFAM" id="SSF142695">
    <property type="entry name" value="RibA-like"/>
    <property type="match status" value="1"/>
</dbReference>
<dbReference type="SUPFAM" id="SSF55821">
    <property type="entry name" value="YrdC/RibB"/>
    <property type="match status" value="1"/>
</dbReference>
<organism>
    <name type="scientific">Bacillus cereus (strain G9842)</name>
    <dbReference type="NCBI Taxonomy" id="405531"/>
    <lineage>
        <taxon>Bacteria</taxon>
        <taxon>Bacillati</taxon>
        <taxon>Bacillota</taxon>
        <taxon>Bacilli</taxon>
        <taxon>Bacillales</taxon>
        <taxon>Bacillaceae</taxon>
        <taxon>Bacillus</taxon>
        <taxon>Bacillus cereus group</taxon>
    </lineage>
</organism>
<name>RIBBA_BACC2</name>
<comment type="function">
    <text evidence="1">Catalyzes the conversion of D-ribulose 5-phosphate to formate and 3,4-dihydroxy-2-butanone 4-phosphate.</text>
</comment>
<comment type="function">
    <text evidence="1">Catalyzes the conversion of GTP to 2,5-diamino-6-ribosylamino-4(3H)-pyrimidinone 5'-phosphate (DARP), formate and pyrophosphate.</text>
</comment>
<comment type="catalytic activity">
    <reaction evidence="1">
        <text>D-ribulose 5-phosphate = (2S)-2-hydroxy-3-oxobutyl phosphate + formate + H(+)</text>
        <dbReference type="Rhea" id="RHEA:18457"/>
        <dbReference type="ChEBI" id="CHEBI:15378"/>
        <dbReference type="ChEBI" id="CHEBI:15740"/>
        <dbReference type="ChEBI" id="CHEBI:58121"/>
        <dbReference type="ChEBI" id="CHEBI:58830"/>
        <dbReference type="EC" id="4.1.99.12"/>
    </reaction>
</comment>
<comment type="catalytic activity">
    <reaction evidence="1">
        <text>GTP + 4 H2O = 2,5-diamino-6-hydroxy-4-(5-phosphoribosylamino)-pyrimidine + formate + 2 phosphate + 3 H(+)</text>
        <dbReference type="Rhea" id="RHEA:23704"/>
        <dbReference type="ChEBI" id="CHEBI:15377"/>
        <dbReference type="ChEBI" id="CHEBI:15378"/>
        <dbReference type="ChEBI" id="CHEBI:15740"/>
        <dbReference type="ChEBI" id="CHEBI:37565"/>
        <dbReference type="ChEBI" id="CHEBI:43474"/>
        <dbReference type="ChEBI" id="CHEBI:58614"/>
        <dbReference type="EC" id="3.5.4.25"/>
    </reaction>
</comment>
<comment type="cofactor">
    <cofactor evidence="1">
        <name>Mg(2+)</name>
        <dbReference type="ChEBI" id="CHEBI:18420"/>
    </cofactor>
    <cofactor evidence="1">
        <name>Mn(2+)</name>
        <dbReference type="ChEBI" id="CHEBI:29035"/>
    </cofactor>
    <text evidence="1">Binds 2 divalent metal cations per subunit. Magnesium or manganese.</text>
</comment>
<comment type="cofactor">
    <cofactor evidence="1">
        <name>Zn(2+)</name>
        <dbReference type="ChEBI" id="CHEBI:29105"/>
    </cofactor>
    <text evidence="1">Binds 1 zinc ion per subunit.</text>
</comment>
<comment type="pathway">
    <text evidence="1">Cofactor biosynthesis; riboflavin biosynthesis; 2-hydroxy-3-oxobutyl phosphate from D-ribulose 5-phosphate: step 1/1.</text>
</comment>
<comment type="pathway">
    <text evidence="1">Cofactor biosynthesis; riboflavin biosynthesis; 5-amino-6-(D-ribitylamino)uracil from GTP: step 1/4.</text>
</comment>
<comment type="similarity">
    <text evidence="1">In the N-terminal section; belongs to the DHBP synthase family.</text>
</comment>
<comment type="similarity">
    <text evidence="1">In the C-terminal section; belongs to the GTP cyclohydrolase II family.</text>
</comment>
<feature type="chain" id="PRO_1000140361" description="Riboflavin biosynthesis protein RibBA">
    <location>
        <begin position="1"/>
        <end position="397"/>
    </location>
</feature>
<feature type="region of interest" description="DHBP synthase">
    <location>
        <begin position="1"/>
        <end position="199"/>
    </location>
</feature>
<feature type="region of interest" description="GTP cyclohydrolase II">
    <location>
        <begin position="200"/>
        <end position="397"/>
    </location>
</feature>
<feature type="active site" description="Proton acceptor; for GTP cyclohydrolase activity" evidence="1">
    <location>
        <position position="327"/>
    </location>
</feature>
<feature type="active site" description="Nucleophile; for GTP cyclohydrolase activity" evidence="1">
    <location>
        <position position="329"/>
    </location>
</feature>
<feature type="binding site" evidence="1">
    <location>
        <begin position="26"/>
        <end position="27"/>
    </location>
    <ligand>
        <name>D-ribulose 5-phosphate</name>
        <dbReference type="ChEBI" id="CHEBI:58121"/>
    </ligand>
</feature>
<feature type="binding site" evidence="1">
    <location>
        <position position="27"/>
    </location>
    <ligand>
        <name>Mg(2+)</name>
        <dbReference type="ChEBI" id="CHEBI:18420"/>
        <label>1</label>
    </ligand>
</feature>
<feature type="binding site" evidence="1">
    <location>
        <position position="27"/>
    </location>
    <ligand>
        <name>Mg(2+)</name>
        <dbReference type="ChEBI" id="CHEBI:18420"/>
        <label>2</label>
    </ligand>
</feature>
<feature type="binding site" evidence="1">
    <location>
        <position position="31"/>
    </location>
    <ligand>
        <name>D-ribulose 5-phosphate</name>
        <dbReference type="ChEBI" id="CHEBI:58121"/>
    </ligand>
</feature>
<feature type="binding site" evidence="1">
    <location>
        <begin position="138"/>
        <end position="142"/>
    </location>
    <ligand>
        <name>D-ribulose 5-phosphate</name>
        <dbReference type="ChEBI" id="CHEBI:58121"/>
    </ligand>
</feature>
<feature type="binding site" evidence="1">
    <location>
        <position position="141"/>
    </location>
    <ligand>
        <name>Mg(2+)</name>
        <dbReference type="ChEBI" id="CHEBI:18420"/>
        <label>2</label>
    </ligand>
</feature>
<feature type="binding site" evidence="1">
    <location>
        <position position="162"/>
    </location>
    <ligand>
        <name>D-ribulose 5-phosphate</name>
        <dbReference type="ChEBI" id="CHEBI:58121"/>
    </ligand>
</feature>
<feature type="binding site" evidence="1">
    <location>
        <begin position="250"/>
        <end position="254"/>
    </location>
    <ligand>
        <name>GTP</name>
        <dbReference type="ChEBI" id="CHEBI:37565"/>
    </ligand>
</feature>
<feature type="binding site" evidence="1">
    <location>
        <position position="255"/>
    </location>
    <ligand>
        <name>Zn(2+)</name>
        <dbReference type="ChEBI" id="CHEBI:29105"/>
        <note>catalytic</note>
    </ligand>
</feature>
<feature type="binding site" evidence="1">
    <location>
        <position position="266"/>
    </location>
    <ligand>
        <name>Zn(2+)</name>
        <dbReference type="ChEBI" id="CHEBI:29105"/>
        <note>catalytic</note>
    </ligand>
</feature>
<feature type="binding site" evidence="1">
    <location>
        <position position="268"/>
    </location>
    <ligand>
        <name>Zn(2+)</name>
        <dbReference type="ChEBI" id="CHEBI:29105"/>
        <note>catalytic</note>
    </ligand>
</feature>
<feature type="binding site" evidence="1">
    <location>
        <position position="271"/>
    </location>
    <ligand>
        <name>GTP</name>
        <dbReference type="ChEBI" id="CHEBI:37565"/>
    </ligand>
</feature>
<feature type="binding site" evidence="1">
    <location>
        <begin position="293"/>
        <end position="295"/>
    </location>
    <ligand>
        <name>GTP</name>
        <dbReference type="ChEBI" id="CHEBI:37565"/>
    </ligand>
</feature>
<feature type="binding site" evidence="1">
    <location>
        <position position="315"/>
    </location>
    <ligand>
        <name>GTP</name>
        <dbReference type="ChEBI" id="CHEBI:37565"/>
    </ligand>
</feature>
<feature type="binding site" evidence="1">
    <location>
        <position position="350"/>
    </location>
    <ligand>
        <name>GTP</name>
        <dbReference type="ChEBI" id="CHEBI:37565"/>
    </ligand>
</feature>
<feature type="binding site" evidence="1">
    <location>
        <position position="355"/>
    </location>
    <ligand>
        <name>GTP</name>
        <dbReference type="ChEBI" id="CHEBI:37565"/>
    </ligand>
</feature>
<feature type="site" description="Essential for DHBP synthase activity" evidence="1">
    <location>
        <position position="124"/>
    </location>
</feature>
<feature type="site" description="Essential for DHBP synthase activity" evidence="1">
    <location>
        <position position="162"/>
    </location>
</feature>
<sequence>MFHRIEEALEDLKQGKVVIVCDDENRENEGDFIALAEYITPETINFMITHGRGLVCVPITEGYAERLQLEPMVSHNTDSHHTAFTVSIDHVSTTTGISAHERATTIQELLNPASKGTDFNRPGHIFPLIAKEGGVLRRAGHTEAAVDLAKLCGAEPAGVICEIINEDGTMARVPDLIECAKQFDIKMITIEDLIAYRRHHETLVTREVEITLPTDFGTFHAIGYSNSLDTKEHIALVKGDISIGEPVLVRVHSECLTGDVFGSHRCDCGPQLHAALAQIEREGKGVLLYMRQEGRGIGLLNKLRAYKLQEEGFDTVEANEKLGFPADLRDYGIGAQILKDLGLQSLRLLTNNPRKIAGLQGYDLEVVERVPLQMPAKEENKSYLQTKVNKLGHLLNL</sequence>
<gene>
    <name evidence="1" type="primary">ribBA</name>
    <name type="ordered locus">BCG9842_B1015</name>
</gene>
<keyword id="KW-0342">GTP-binding</keyword>
<keyword id="KW-0378">Hydrolase</keyword>
<keyword id="KW-0456">Lyase</keyword>
<keyword id="KW-0460">Magnesium</keyword>
<keyword id="KW-0464">Manganese</keyword>
<keyword id="KW-0479">Metal-binding</keyword>
<keyword id="KW-0511">Multifunctional enzyme</keyword>
<keyword id="KW-0547">Nucleotide-binding</keyword>
<keyword id="KW-0686">Riboflavin biosynthesis</keyword>
<keyword id="KW-0862">Zinc</keyword>
<proteinExistence type="inferred from homology"/>
<protein>
    <recommendedName>
        <fullName evidence="1">Riboflavin biosynthesis protein RibBA</fullName>
    </recommendedName>
    <domain>
        <recommendedName>
            <fullName evidence="1">3,4-dihydroxy-2-butanone 4-phosphate synthase</fullName>
            <shortName evidence="1">DHBP synthase</shortName>
            <ecNumber evidence="1">4.1.99.12</ecNumber>
        </recommendedName>
    </domain>
    <domain>
        <recommendedName>
            <fullName evidence="1">GTP cyclohydrolase-2</fullName>
            <ecNumber evidence="1">3.5.4.25</ecNumber>
        </recommendedName>
        <alternativeName>
            <fullName evidence="1">GTP cyclohydrolase II</fullName>
        </alternativeName>
    </domain>
</protein>